<name>RL11_HELP2</name>
<reference key="1">
    <citation type="submission" date="2008-10" db="EMBL/GenBank/DDBJ databases">
        <title>The complete genome sequence of Helicobacter pylori strain P12.</title>
        <authorList>
            <person name="Fischer W."/>
            <person name="Windhager L."/>
            <person name="Karnholz A."/>
            <person name="Zeiller M."/>
            <person name="Zimmer R."/>
            <person name="Haas R."/>
        </authorList>
    </citation>
    <scope>NUCLEOTIDE SEQUENCE [LARGE SCALE GENOMIC DNA]</scope>
    <source>
        <strain>P12</strain>
    </source>
</reference>
<gene>
    <name evidence="1" type="primary">rplK</name>
    <name type="ordered locus">HPP12_1167</name>
</gene>
<comment type="function">
    <text evidence="1">Forms part of the ribosomal stalk which helps the ribosome interact with GTP-bound translation factors.</text>
</comment>
<comment type="subunit">
    <text evidence="1">Part of the ribosomal stalk of the 50S ribosomal subunit. Interacts with L10 and the large rRNA to form the base of the stalk. L10 forms an elongated spine to which L12 dimers bind in a sequential fashion forming a multimeric L10(L12)X complex.</text>
</comment>
<comment type="PTM">
    <text evidence="1">One or more lysine residues are methylated.</text>
</comment>
<comment type="similarity">
    <text evidence="1">Belongs to the universal ribosomal protein uL11 family.</text>
</comment>
<sequence length="141" mass="15329">MAKKVVGEIKLQIPAGKANPSPPVGPALGQRGVNIMEFCKAFNERTKDMGSFNIPVIITVYQDKSFTFITKKPPVTDLIKKASGVEKGSDNPLKNKIAKLTHKQVEEIAQLKMEDLNTSTMEAAKKIVMGSARSMGVEVVD</sequence>
<protein>
    <recommendedName>
        <fullName evidence="1">Large ribosomal subunit protein uL11</fullName>
    </recommendedName>
    <alternativeName>
        <fullName evidence="2">50S ribosomal protein L11</fullName>
    </alternativeName>
</protein>
<organism>
    <name type="scientific">Helicobacter pylori (strain P12)</name>
    <dbReference type="NCBI Taxonomy" id="570508"/>
    <lineage>
        <taxon>Bacteria</taxon>
        <taxon>Pseudomonadati</taxon>
        <taxon>Campylobacterota</taxon>
        <taxon>Epsilonproteobacteria</taxon>
        <taxon>Campylobacterales</taxon>
        <taxon>Helicobacteraceae</taxon>
        <taxon>Helicobacter</taxon>
    </lineage>
</organism>
<accession>B6JN41</accession>
<proteinExistence type="inferred from homology"/>
<evidence type="ECO:0000255" key="1">
    <source>
        <dbReference type="HAMAP-Rule" id="MF_00736"/>
    </source>
</evidence>
<evidence type="ECO:0000305" key="2"/>
<feature type="chain" id="PRO_1000195649" description="Large ribosomal subunit protein uL11">
    <location>
        <begin position="1"/>
        <end position="141"/>
    </location>
</feature>
<keyword id="KW-0488">Methylation</keyword>
<keyword id="KW-0687">Ribonucleoprotein</keyword>
<keyword id="KW-0689">Ribosomal protein</keyword>
<keyword id="KW-0694">RNA-binding</keyword>
<keyword id="KW-0699">rRNA-binding</keyword>
<dbReference type="EMBL" id="CP001217">
    <property type="protein sequence ID" value="ACJ08319.1"/>
    <property type="molecule type" value="Genomic_DNA"/>
</dbReference>
<dbReference type="SMR" id="B6JN41"/>
<dbReference type="KEGG" id="hpp:HPP12_1167"/>
<dbReference type="HOGENOM" id="CLU_074237_2_0_7"/>
<dbReference type="Proteomes" id="UP000008198">
    <property type="component" value="Chromosome"/>
</dbReference>
<dbReference type="GO" id="GO:0022625">
    <property type="term" value="C:cytosolic large ribosomal subunit"/>
    <property type="evidence" value="ECO:0007669"/>
    <property type="project" value="TreeGrafter"/>
</dbReference>
<dbReference type="GO" id="GO:0070180">
    <property type="term" value="F:large ribosomal subunit rRNA binding"/>
    <property type="evidence" value="ECO:0007669"/>
    <property type="project" value="UniProtKB-UniRule"/>
</dbReference>
<dbReference type="GO" id="GO:0003735">
    <property type="term" value="F:structural constituent of ribosome"/>
    <property type="evidence" value="ECO:0007669"/>
    <property type="project" value="InterPro"/>
</dbReference>
<dbReference type="GO" id="GO:0006412">
    <property type="term" value="P:translation"/>
    <property type="evidence" value="ECO:0007669"/>
    <property type="project" value="UniProtKB-UniRule"/>
</dbReference>
<dbReference type="CDD" id="cd00349">
    <property type="entry name" value="Ribosomal_L11"/>
    <property type="match status" value="1"/>
</dbReference>
<dbReference type="FunFam" id="1.10.10.250:FF:000001">
    <property type="entry name" value="50S ribosomal protein L11"/>
    <property type="match status" value="1"/>
</dbReference>
<dbReference type="FunFam" id="3.30.1550.10:FF:000001">
    <property type="entry name" value="50S ribosomal protein L11"/>
    <property type="match status" value="1"/>
</dbReference>
<dbReference type="Gene3D" id="1.10.10.250">
    <property type="entry name" value="Ribosomal protein L11, C-terminal domain"/>
    <property type="match status" value="1"/>
</dbReference>
<dbReference type="Gene3D" id="3.30.1550.10">
    <property type="entry name" value="Ribosomal protein L11/L12, N-terminal domain"/>
    <property type="match status" value="1"/>
</dbReference>
<dbReference type="HAMAP" id="MF_00736">
    <property type="entry name" value="Ribosomal_uL11"/>
    <property type="match status" value="1"/>
</dbReference>
<dbReference type="InterPro" id="IPR000911">
    <property type="entry name" value="Ribosomal_uL11"/>
</dbReference>
<dbReference type="InterPro" id="IPR006519">
    <property type="entry name" value="Ribosomal_uL11_bac-typ"/>
</dbReference>
<dbReference type="InterPro" id="IPR020783">
    <property type="entry name" value="Ribosomal_uL11_C"/>
</dbReference>
<dbReference type="InterPro" id="IPR036769">
    <property type="entry name" value="Ribosomal_uL11_C_sf"/>
</dbReference>
<dbReference type="InterPro" id="IPR020785">
    <property type="entry name" value="Ribosomal_uL11_CS"/>
</dbReference>
<dbReference type="InterPro" id="IPR020784">
    <property type="entry name" value="Ribosomal_uL11_N"/>
</dbReference>
<dbReference type="InterPro" id="IPR036796">
    <property type="entry name" value="Ribosomal_uL11_N_sf"/>
</dbReference>
<dbReference type="NCBIfam" id="TIGR01632">
    <property type="entry name" value="L11_bact"/>
    <property type="match status" value="1"/>
</dbReference>
<dbReference type="PANTHER" id="PTHR11661">
    <property type="entry name" value="60S RIBOSOMAL PROTEIN L12"/>
    <property type="match status" value="1"/>
</dbReference>
<dbReference type="PANTHER" id="PTHR11661:SF1">
    <property type="entry name" value="LARGE RIBOSOMAL SUBUNIT PROTEIN UL11M"/>
    <property type="match status" value="1"/>
</dbReference>
<dbReference type="Pfam" id="PF00298">
    <property type="entry name" value="Ribosomal_L11"/>
    <property type="match status" value="1"/>
</dbReference>
<dbReference type="Pfam" id="PF03946">
    <property type="entry name" value="Ribosomal_L11_N"/>
    <property type="match status" value="1"/>
</dbReference>
<dbReference type="SMART" id="SM00649">
    <property type="entry name" value="RL11"/>
    <property type="match status" value="1"/>
</dbReference>
<dbReference type="SUPFAM" id="SSF54747">
    <property type="entry name" value="Ribosomal L11/L12e N-terminal domain"/>
    <property type="match status" value="1"/>
</dbReference>
<dbReference type="SUPFAM" id="SSF46906">
    <property type="entry name" value="Ribosomal protein L11, C-terminal domain"/>
    <property type="match status" value="1"/>
</dbReference>
<dbReference type="PROSITE" id="PS00359">
    <property type="entry name" value="RIBOSOMAL_L11"/>
    <property type="match status" value="1"/>
</dbReference>